<gene>
    <name evidence="1" type="primary">dnaA</name>
    <name type="ordered locus">SPG_0001</name>
</gene>
<dbReference type="EMBL" id="CP001015">
    <property type="protein sequence ID" value="ACF56248.1"/>
    <property type="molecule type" value="Genomic_DNA"/>
</dbReference>
<dbReference type="SMR" id="B5E568"/>
<dbReference type="KEGG" id="spx:SPG_0001"/>
<dbReference type="HOGENOM" id="CLU_026910_3_1_9"/>
<dbReference type="GO" id="GO:0005737">
    <property type="term" value="C:cytoplasm"/>
    <property type="evidence" value="ECO:0007669"/>
    <property type="project" value="UniProtKB-SubCell"/>
</dbReference>
<dbReference type="GO" id="GO:0005886">
    <property type="term" value="C:plasma membrane"/>
    <property type="evidence" value="ECO:0007669"/>
    <property type="project" value="TreeGrafter"/>
</dbReference>
<dbReference type="GO" id="GO:0005524">
    <property type="term" value="F:ATP binding"/>
    <property type="evidence" value="ECO:0007669"/>
    <property type="project" value="UniProtKB-UniRule"/>
</dbReference>
<dbReference type="GO" id="GO:0016887">
    <property type="term" value="F:ATP hydrolysis activity"/>
    <property type="evidence" value="ECO:0007669"/>
    <property type="project" value="InterPro"/>
</dbReference>
<dbReference type="GO" id="GO:0003688">
    <property type="term" value="F:DNA replication origin binding"/>
    <property type="evidence" value="ECO:0007669"/>
    <property type="project" value="UniProtKB-UniRule"/>
</dbReference>
<dbReference type="GO" id="GO:0008289">
    <property type="term" value="F:lipid binding"/>
    <property type="evidence" value="ECO:0007669"/>
    <property type="project" value="UniProtKB-KW"/>
</dbReference>
<dbReference type="GO" id="GO:0006270">
    <property type="term" value="P:DNA replication initiation"/>
    <property type="evidence" value="ECO:0007669"/>
    <property type="project" value="UniProtKB-UniRule"/>
</dbReference>
<dbReference type="GO" id="GO:0006275">
    <property type="term" value="P:regulation of DNA replication"/>
    <property type="evidence" value="ECO:0007669"/>
    <property type="project" value="UniProtKB-UniRule"/>
</dbReference>
<dbReference type="CDD" id="cd00009">
    <property type="entry name" value="AAA"/>
    <property type="match status" value="1"/>
</dbReference>
<dbReference type="CDD" id="cd06571">
    <property type="entry name" value="Bac_DnaA_C"/>
    <property type="match status" value="1"/>
</dbReference>
<dbReference type="FunFam" id="1.10.1750.10:FF:000002">
    <property type="entry name" value="Chromosomal replication initiator protein DnaA"/>
    <property type="match status" value="1"/>
</dbReference>
<dbReference type="FunFam" id="1.10.8.60:FF:000129">
    <property type="entry name" value="Chromosomal replication initiator protein DnaA"/>
    <property type="match status" value="1"/>
</dbReference>
<dbReference type="FunFam" id="3.40.50.300:FF:000668">
    <property type="entry name" value="Chromosomal replication initiator protein DnaA"/>
    <property type="match status" value="1"/>
</dbReference>
<dbReference type="Gene3D" id="1.10.1750.10">
    <property type="match status" value="1"/>
</dbReference>
<dbReference type="Gene3D" id="1.10.8.60">
    <property type="match status" value="1"/>
</dbReference>
<dbReference type="Gene3D" id="3.40.50.300">
    <property type="entry name" value="P-loop containing nucleotide triphosphate hydrolases"/>
    <property type="match status" value="1"/>
</dbReference>
<dbReference type="HAMAP" id="MF_00377">
    <property type="entry name" value="DnaA_bact"/>
    <property type="match status" value="1"/>
</dbReference>
<dbReference type="InterPro" id="IPR003593">
    <property type="entry name" value="AAA+_ATPase"/>
</dbReference>
<dbReference type="InterPro" id="IPR001957">
    <property type="entry name" value="Chromosome_initiator_DnaA"/>
</dbReference>
<dbReference type="InterPro" id="IPR020591">
    <property type="entry name" value="Chromosome_initiator_DnaA-like"/>
</dbReference>
<dbReference type="InterPro" id="IPR018312">
    <property type="entry name" value="Chromosome_initiator_DnaA_CS"/>
</dbReference>
<dbReference type="InterPro" id="IPR013159">
    <property type="entry name" value="DnaA_C"/>
</dbReference>
<dbReference type="InterPro" id="IPR013317">
    <property type="entry name" value="DnaA_dom"/>
</dbReference>
<dbReference type="InterPro" id="IPR027417">
    <property type="entry name" value="P-loop_NTPase"/>
</dbReference>
<dbReference type="InterPro" id="IPR010921">
    <property type="entry name" value="Trp_repressor/repl_initiator"/>
</dbReference>
<dbReference type="NCBIfam" id="TIGR00362">
    <property type="entry name" value="DnaA"/>
    <property type="match status" value="1"/>
</dbReference>
<dbReference type="PANTHER" id="PTHR30050">
    <property type="entry name" value="CHROMOSOMAL REPLICATION INITIATOR PROTEIN DNAA"/>
    <property type="match status" value="1"/>
</dbReference>
<dbReference type="PANTHER" id="PTHR30050:SF2">
    <property type="entry name" value="CHROMOSOMAL REPLICATION INITIATOR PROTEIN DNAA"/>
    <property type="match status" value="1"/>
</dbReference>
<dbReference type="Pfam" id="PF00308">
    <property type="entry name" value="Bac_DnaA"/>
    <property type="match status" value="1"/>
</dbReference>
<dbReference type="Pfam" id="PF08299">
    <property type="entry name" value="Bac_DnaA_C"/>
    <property type="match status" value="1"/>
</dbReference>
<dbReference type="PRINTS" id="PR00051">
    <property type="entry name" value="DNAA"/>
</dbReference>
<dbReference type="SMART" id="SM00382">
    <property type="entry name" value="AAA"/>
    <property type="match status" value="1"/>
</dbReference>
<dbReference type="SMART" id="SM00760">
    <property type="entry name" value="Bac_DnaA_C"/>
    <property type="match status" value="1"/>
</dbReference>
<dbReference type="SUPFAM" id="SSF52540">
    <property type="entry name" value="P-loop containing nucleoside triphosphate hydrolases"/>
    <property type="match status" value="1"/>
</dbReference>
<dbReference type="SUPFAM" id="SSF48295">
    <property type="entry name" value="TrpR-like"/>
    <property type="match status" value="1"/>
</dbReference>
<dbReference type="PROSITE" id="PS01008">
    <property type="entry name" value="DNAA"/>
    <property type="match status" value="1"/>
</dbReference>
<protein>
    <recommendedName>
        <fullName evidence="1">Chromosomal replication initiator protein DnaA</fullName>
    </recommendedName>
</protein>
<name>DNAA_STRP4</name>
<comment type="function">
    <text evidence="1">Plays an essential role in the initiation and regulation of chromosomal replication. ATP-DnaA binds to the origin of replication (oriC) to initiate formation of the DNA replication initiation complex once per cell cycle. Binds the DnaA box (a 9 base pair repeat at the origin) and separates the double-stranded (ds)DNA. Forms a right-handed helical filament on oriC DNA; dsDNA binds to the exterior of the filament while single-stranded (ss)DNA is stabiized in the filament's interior. The ATP-DnaA-oriC complex binds and stabilizes one strand of the AT-rich DNA unwinding element (DUE), permitting loading of DNA polymerase. After initiation quickly degrades to an ADP-DnaA complex that is not apt for DNA replication. Binds acidic phospholipids.</text>
</comment>
<comment type="subunit">
    <text evidence="1">Oligomerizes as a right-handed, spiral filament on DNA at oriC.</text>
</comment>
<comment type="subcellular location">
    <subcellularLocation>
        <location evidence="1">Cytoplasm</location>
    </subcellularLocation>
</comment>
<comment type="domain">
    <text evidence="1">Domain I is involved in oligomerization and binding regulators, domain II is flexibile and of varying length in different bacteria, domain III forms the AAA+ region, while domain IV binds dsDNA.</text>
</comment>
<comment type="similarity">
    <text evidence="1">Belongs to the DnaA family.</text>
</comment>
<sequence>MKEKQFWNRILEFAQERLTRSMYDFYAIQAELIKVEENVATIFLPRSEMEMVWEKQLKDIIVVAGFEIYDAEITPHYIFTKPQDTTSSQVEEATNLTLYNYSPKLVSIPYSDTGLKEKYTFDNFIQGDGNVWAVSAALAVSEDLALTYNPLFIYGGPGLGKTHLLNAIGNEILKNIPNARVKYIPAESFINDFLDHLRLGEMEKFKKTYRSLDLLLIDDIQSLSGKKVATQEEFFNTFNALHDKQKQIVLTSDRSPKHLEGLEERLVTRFSWGLTQTITPPDFETRIAILQSKTEHLGYNFQSDTLEYLAGQFDSNVRDLEGAINDITLIARVKKIKDITIDIAAEAIRARKQDVSQMLVIPIDKIQTEVGNFYGVSIKEMKGSRRLQNIVLARQVAMYLSRELTDNSLPKIGKEFGGKDHTTVIHAHAKIKSLIDQDDNLRLEIESIKKKIK</sequence>
<accession>B5E568</accession>
<organism>
    <name type="scientific">Streptococcus pneumoniae serotype 19F (strain G54)</name>
    <dbReference type="NCBI Taxonomy" id="512566"/>
    <lineage>
        <taxon>Bacteria</taxon>
        <taxon>Bacillati</taxon>
        <taxon>Bacillota</taxon>
        <taxon>Bacilli</taxon>
        <taxon>Lactobacillales</taxon>
        <taxon>Streptococcaceae</taxon>
        <taxon>Streptococcus</taxon>
    </lineage>
</organism>
<evidence type="ECO:0000255" key="1">
    <source>
        <dbReference type="HAMAP-Rule" id="MF_00377"/>
    </source>
</evidence>
<feature type="chain" id="PRO_1000122023" description="Chromosomal replication initiator protein DnaA">
    <location>
        <begin position="1"/>
        <end position="453"/>
    </location>
</feature>
<feature type="region of interest" description="Domain I, interacts with DnaA modulators" evidence="1">
    <location>
        <begin position="1"/>
        <end position="74"/>
    </location>
</feature>
<feature type="region of interest" description="Domain II" evidence="1">
    <location>
        <begin position="74"/>
        <end position="113"/>
    </location>
</feature>
<feature type="region of interest" description="Domain III, AAA+ region" evidence="1">
    <location>
        <begin position="114"/>
        <end position="331"/>
    </location>
</feature>
<feature type="region of interest" description="Domain IV, binds dsDNA" evidence="1">
    <location>
        <begin position="332"/>
        <end position="453"/>
    </location>
</feature>
<feature type="binding site" evidence="1">
    <location>
        <position position="158"/>
    </location>
    <ligand>
        <name>ATP</name>
        <dbReference type="ChEBI" id="CHEBI:30616"/>
    </ligand>
</feature>
<feature type="binding site" evidence="1">
    <location>
        <position position="160"/>
    </location>
    <ligand>
        <name>ATP</name>
        <dbReference type="ChEBI" id="CHEBI:30616"/>
    </ligand>
</feature>
<feature type="binding site" evidence="1">
    <location>
        <position position="161"/>
    </location>
    <ligand>
        <name>ATP</name>
        <dbReference type="ChEBI" id="CHEBI:30616"/>
    </ligand>
</feature>
<feature type="binding site" evidence="1">
    <location>
        <position position="162"/>
    </location>
    <ligand>
        <name>ATP</name>
        <dbReference type="ChEBI" id="CHEBI:30616"/>
    </ligand>
</feature>
<proteinExistence type="inferred from homology"/>
<reference key="1">
    <citation type="journal article" date="2001" name="Microb. Drug Resist.">
        <title>Annotated draft genomic sequence from a Streptococcus pneumoniae type 19F clinical isolate.</title>
        <authorList>
            <person name="Dopazo J."/>
            <person name="Mendoza A."/>
            <person name="Herrero J."/>
            <person name="Caldara F."/>
            <person name="Humbert Y."/>
            <person name="Friedli L."/>
            <person name="Guerrier M."/>
            <person name="Grand-Schenk E."/>
            <person name="Gandin C."/>
            <person name="de Francesco M."/>
            <person name="Polissi A."/>
            <person name="Buell G."/>
            <person name="Feger G."/>
            <person name="Garcia E."/>
            <person name="Peitsch M."/>
            <person name="Garcia-Bustos J.F."/>
        </authorList>
    </citation>
    <scope>NUCLEOTIDE SEQUENCE [LARGE SCALE GENOMIC DNA]</scope>
    <source>
        <strain>G54</strain>
    </source>
</reference>
<reference key="2">
    <citation type="submission" date="2008-03" db="EMBL/GenBank/DDBJ databases">
        <title>Pneumococcal beta glucoside metabolism investigated by whole genome comparison.</title>
        <authorList>
            <person name="Mulas L."/>
            <person name="Trappetti C."/>
            <person name="Hakenbeck R."/>
            <person name="Iannelli F."/>
            <person name="Pozzi G."/>
            <person name="Davidsen T.M."/>
            <person name="Tettelin H."/>
            <person name="Oggioni M."/>
        </authorList>
    </citation>
    <scope>NUCLEOTIDE SEQUENCE [LARGE SCALE GENOMIC DNA]</scope>
    <source>
        <strain>G54</strain>
    </source>
</reference>
<keyword id="KW-0067">ATP-binding</keyword>
<keyword id="KW-0963">Cytoplasm</keyword>
<keyword id="KW-0235">DNA replication</keyword>
<keyword id="KW-0238">DNA-binding</keyword>
<keyword id="KW-0446">Lipid-binding</keyword>
<keyword id="KW-0547">Nucleotide-binding</keyword>